<feature type="chain" id="PRO_0000391280" description="NAD(P)H-quinone oxidoreductase subunit 2 B, chloroplastic">
    <location>
        <begin position="1"/>
        <end position="510"/>
    </location>
</feature>
<feature type="transmembrane region" description="Helical" evidence="1">
    <location>
        <begin position="24"/>
        <end position="44"/>
    </location>
</feature>
<feature type="transmembrane region" description="Helical" evidence="1">
    <location>
        <begin position="57"/>
        <end position="77"/>
    </location>
</feature>
<feature type="transmembrane region" description="Helical" evidence="1">
    <location>
        <begin position="99"/>
        <end position="119"/>
    </location>
</feature>
<feature type="transmembrane region" description="Helical" evidence="1">
    <location>
        <begin position="124"/>
        <end position="144"/>
    </location>
</feature>
<feature type="transmembrane region" description="Helical" evidence="1">
    <location>
        <begin position="150"/>
        <end position="170"/>
    </location>
</feature>
<feature type="transmembrane region" description="Helical" evidence="1">
    <location>
        <begin position="183"/>
        <end position="203"/>
    </location>
</feature>
<feature type="transmembrane region" description="Helical" evidence="1">
    <location>
        <begin position="227"/>
        <end position="247"/>
    </location>
</feature>
<feature type="transmembrane region" description="Helical" evidence="1">
    <location>
        <begin position="295"/>
        <end position="315"/>
    </location>
</feature>
<feature type="transmembrane region" description="Helical" evidence="1">
    <location>
        <begin position="323"/>
        <end position="343"/>
    </location>
</feature>
<feature type="transmembrane region" description="Helical" evidence="1">
    <location>
        <begin position="347"/>
        <end position="367"/>
    </location>
</feature>
<feature type="transmembrane region" description="Helical" evidence="1">
    <location>
        <begin position="395"/>
        <end position="415"/>
    </location>
</feature>
<feature type="transmembrane region" description="Helical" evidence="1">
    <location>
        <begin position="418"/>
        <end position="438"/>
    </location>
</feature>
<feature type="transmembrane region" description="Helical" evidence="1">
    <location>
        <begin position="484"/>
        <end position="504"/>
    </location>
</feature>
<accession>P0CC85</accession>
<accession>Q0G9F9</accession>
<evidence type="ECO:0000255" key="1">
    <source>
        <dbReference type="HAMAP-Rule" id="MF_00445"/>
    </source>
</evidence>
<reference key="1">
    <citation type="journal article" date="2006" name="BMC Evol. Biol.">
        <title>Complete plastid genome sequences of Drimys, Liriodendron, and Piper: implications for the phylogenetic relationships of magnoliids.</title>
        <authorList>
            <person name="Cai Z."/>
            <person name="Penaflor C."/>
            <person name="Kuehl J.V."/>
            <person name="Leebens-Mack J."/>
            <person name="Carlson J.E."/>
            <person name="dePamphilis C.W."/>
            <person name="Boore J.L."/>
            <person name="Jansen R.K."/>
        </authorList>
    </citation>
    <scope>NUCLEOTIDE SEQUENCE [LARGE SCALE GENOMIC DNA]</scope>
</reference>
<gene>
    <name evidence="1" type="primary">ndhB2</name>
</gene>
<geneLocation type="chloroplast"/>
<name>NU2C2_LIRTU</name>
<sequence>MIWHVQNENFILDSTRIFMKAFHLLLFHGSFIFPECILIFGLILLLMIDSTSDQKDIPWLYFISSTSLVMSITALLFRWREEPMISFSGNFQTNNFNEIFQFLILLCSTLCIPLSVEYIECTEMAITEFLLFVLTATLGGMFLCGANDSITIFVAPECFSLCSYLLSGYTKRDVRSNEATTKYLLMGGASSSILVHGFSWLYGSSGGEIELQEIVNGLIKTQMYNSPGISIALIFITVGIGFKLSPAPSHQWTPDVYEGSPTPVVAFLSVTSKVAASASATRIFDIPFYFSSNEWHLLLEILAILSMILGNLIAITQTSMKRMLAYSSIGQIGYVIIGIIVGDSNDGYASMITYMLFYISMNLGTFARIVSFGLRTGTDNIRDYAGLYTKDPFLALSSALCLLSLGGLPPLAGFFGKLHLFWCGWQAGLYFLVSIGLLTSVVSIYYYLKIIKLLMTGRNQEITPHVRNYRRSPLRSNNSIELSMIVCVIASTIPGISMNPIIAIAQDTLF</sequence>
<comment type="function">
    <text evidence="1">NDH shuttles electrons from NAD(P)H:plastoquinone, via FMN and iron-sulfur (Fe-S) centers, to quinones in the photosynthetic chain and possibly in a chloroplast respiratory chain. The immediate electron acceptor for the enzyme in this species is believed to be plastoquinone. Couples the redox reaction to proton translocation, and thus conserves the redox energy in a proton gradient.</text>
</comment>
<comment type="catalytic activity">
    <reaction evidence="1">
        <text>a plastoquinone + NADH + (n+1) H(+)(in) = a plastoquinol + NAD(+) + n H(+)(out)</text>
        <dbReference type="Rhea" id="RHEA:42608"/>
        <dbReference type="Rhea" id="RHEA-COMP:9561"/>
        <dbReference type="Rhea" id="RHEA-COMP:9562"/>
        <dbReference type="ChEBI" id="CHEBI:15378"/>
        <dbReference type="ChEBI" id="CHEBI:17757"/>
        <dbReference type="ChEBI" id="CHEBI:57540"/>
        <dbReference type="ChEBI" id="CHEBI:57945"/>
        <dbReference type="ChEBI" id="CHEBI:62192"/>
    </reaction>
</comment>
<comment type="catalytic activity">
    <reaction evidence="1">
        <text>a plastoquinone + NADPH + (n+1) H(+)(in) = a plastoquinol + NADP(+) + n H(+)(out)</text>
        <dbReference type="Rhea" id="RHEA:42612"/>
        <dbReference type="Rhea" id="RHEA-COMP:9561"/>
        <dbReference type="Rhea" id="RHEA-COMP:9562"/>
        <dbReference type="ChEBI" id="CHEBI:15378"/>
        <dbReference type="ChEBI" id="CHEBI:17757"/>
        <dbReference type="ChEBI" id="CHEBI:57783"/>
        <dbReference type="ChEBI" id="CHEBI:58349"/>
        <dbReference type="ChEBI" id="CHEBI:62192"/>
    </reaction>
</comment>
<comment type="subunit">
    <text evidence="1">NDH is composed of at least 16 different subunits, 5 of which are encoded in the nucleus.</text>
</comment>
<comment type="subcellular location">
    <subcellularLocation>
        <location evidence="1">Plastid</location>
        <location evidence="1">Chloroplast thylakoid membrane</location>
        <topology evidence="1">Multi-pass membrane protein</topology>
    </subcellularLocation>
</comment>
<comment type="similarity">
    <text evidence="1">Belongs to the complex I subunit 2 family.</text>
</comment>
<proteinExistence type="inferred from homology"/>
<dbReference type="EC" id="7.1.1.-" evidence="1"/>
<dbReference type="EMBL" id="DQ899947">
    <property type="protein sequence ID" value="ABI32570.1"/>
    <property type="molecule type" value="Genomic_DNA"/>
</dbReference>
<dbReference type="SMR" id="P0CC85"/>
<dbReference type="GO" id="GO:0009535">
    <property type="term" value="C:chloroplast thylakoid membrane"/>
    <property type="evidence" value="ECO:0007669"/>
    <property type="project" value="UniProtKB-SubCell"/>
</dbReference>
<dbReference type="GO" id="GO:0008137">
    <property type="term" value="F:NADH dehydrogenase (ubiquinone) activity"/>
    <property type="evidence" value="ECO:0007669"/>
    <property type="project" value="InterPro"/>
</dbReference>
<dbReference type="GO" id="GO:0048038">
    <property type="term" value="F:quinone binding"/>
    <property type="evidence" value="ECO:0007669"/>
    <property type="project" value="UniProtKB-KW"/>
</dbReference>
<dbReference type="GO" id="GO:0042773">
    <property type="term" value="P:ATP synthesis coupled electron transport"/>
    <property type="evidence" value="ECO:0007669"/>
    <property type="project" value="InterPro"/>
</dbReference>
<dbReference type="GO" id="GO:0019684">
    <property type="term" value="P:photosynthesis, light reaction"/>
    <property type="evidence" value="ECO:0007669"/>
    <property type="project" value="UniProtKB-UniRule"/>
</dbReference>
<dbReference type="HAMAP" id="MF_00445">
    <property type="entry name" value="NDH1_NuoN_1"/>
    <property type="match status" value="1"/>
</dbReference>
<dbReference type="InterPro" id="IPR010096">
    <property type="entry name" value="NADH-Q_OxRdtase_suN/2"/>
</dbReference>
<dbReference type="InterPro" id="IPR001750">
    <property type="entry name" value="ND/Mrp_TM"/>
</dbReference>
<dbReference type="InterPro" id="IPR045693">
    <property type="entry name" value="Ndh2_N"/>
</dbReference>
<dbReference type="NCBIfam" id="TIGR01770">
    <property type="entry name" value="NDH_I_N"/>
    <property type="match status" value="1"/>
</dbReference>
<dbReference type="NCBIfam" id="NF002701">
    <property type="entry name" value="PRK02504.1"/>
    <property type="match status" value="1"/>
</dbReference>
<dbReference type="PANTHER" id="PTHR22773">
    <property type="entry name" value="NADH DEHYDROGENASE"/>
    <property type="match status" value="1"/>
</dbReference>
<dbReference type="Pfam" id="PF19530">
    <property type="entry name" value="Ndh2_N"/>
    <property type="match status" value="1"/>
</dbReference>
<dbReference type="Pfam" id="PF00361">
    <property type="entry name" value="Proton_antipo_M"/>
    <property type="match status" value="1"/>
</dbReference>
<dbReference type="PRINTS" id="PR01434">
    <property type="entry name" value="NADHDHGNASE5"/>
</dbReference>
<keyword id="KW-0150">Chloroplast</keyword>
<keyword id="KW-0472">Membrane</keyword>
<keyword id="KW-0520">NAD</keyword>
<keyword id="KW-0521">NADP</keyword>
<keyword id="KW-0934">Plastid</keyword>
<keyword id="KW-0618">Plastoquinone</keyword>
<keyword id="KW-0874">Quinone</keyword>
<keyword id="KW-0793">Thylakoid</keyword>
<keyword id="KW-1278">Translocase</keyword>
<keyword id="KW-0812">Transmembrane</keyword>
<keyword id="KW-1133">Transmembrane helix</keyword>
<keyword id="KW-0813">Transport</keyword>
<organism>
    <name type="scientific">Liriodendron tulipifera</name>
    <name type="common">Tuliptree</name>
    <name type="synonym">Tulip poplar</name>
    <dbReference type="NCBI Taxonomy" id="3415"/>
    <lineage>
        <taxon>Eukaryota</taxon>
        <taxon>Viridiplantae</taxon>
        <taxon>Streptophyta</taxon>
        <taxon>Embryophyta</taxon>
        <taxon>Tracheophyta</taxon>
        <taxon>Spermatophyta</taxon>
        <taxon>Magnoliopsida</taxon>
        <taxon>Magnoliidae</taxon>
        <taxon>Magnoliales</taxon>
        <taxon>Magnoliaceae</taxon>
        <taxon>Liriodendron</taxon>
    </lineage>
</organism>
<protein>
    <recommendedName>
        <fullName evidence="1">NAD(P)H-quinone oxidoreductase subunit 2 B, chloroplastic</fullName>
        <ecNumber evidence="1">7.1.1.-</ecNumber>
    </recommendedName>
    <alternativeName>
        <fullName evidence="1">NAD(P)H dehydrogenase, subunit 2 B</fullName>
    </alternativeName>
    <alternativeName>
        <fullName evidence="1">NADH-plastoquinone oxidoreductase subunit 2 B</fullName>
    </alternativeName>
</protein>